<keyword id="KW-0067">ATP-binding</keyword>
<keyword id="KW-0227">DNA damage</keyword>
<keyword id="KW-0234">DNA repair</keyword>
<keyword id="KW-0238">DNA-binding</keyword>
<keyword id="KW-0547">Nucleotide-binding</keyword>
<sequence>MLLNMNLQELKQKYNYDVATKMMQQYLDIKFAHLDCLLLFRMGDFYEMFYEDAILASNVLGIALTKRGKNGEEEIAMCGVPYHALENYLTKLIEENYKVAICDQLETPEEAKNRGGYKAVVTRDVTRIITPGTIIEENLIASAEPNYLASLVIPKNKETASLCYVDLSTSEIVVVNVPETEILNELARLKPREILLSENLRSSNLADSIFKQLNFRITYQVDSFFAINKCKKIILDFYKMKDIKGIGEISSSQICAIGSVLEYLSLTQKQNIPHLPIPRIINFHSYMTIDFSTRRNLEIVTNSQGDSQGSLLSTLNHTVTKQGGRLLYNFLSSPLTNIAKINHRLNITEFFYSNLEIVKKIRELLKKTSDIERCLTRITMNRSSGRDLLSIKYTLETATIIKEVFFDAYGFNLPDFIEKIIKPLSGDAELYNLIDETIREDAPNNLNDGGIIKHEYHPKVAQLHDLINNGKLYIEKLKDQYRKETGIDSLKISHNNVIGLFIDITAKNVNKILDPKFIHRQTTVNHVRYTTAELQKLESELVNAKTLVISLEKELYADICSQVIEKASYLRMLASSLSGLDVFCNFAYIADEYDYVKPEFTDDLSFDIVKGRHPVVEKALQRESKSFVYNDCHLSELERIWLITGPNMAGKSTFLRQNAIIAIIAQIGSFVPAKSAKIGVVDKIFSRIGAADDLIKGQSTFMAEMLETSAILAQSTKNSLIILDEVGRGTSTYDGVSIAWSVLEYIHDKLKCRCLFATHYHELTVMSNFLPALQNYTIAIEESGKDILFLHNIISGAADRSYGLHVAALAGLPESVINRAEQILLKFEKTSTGKGKNILSTESNNLSLFYLEPNKTTISSKLDKKFSTIDPDKLSPKEALELIYELKKLV</sequence>
<organism>
    <name type="scientific">Rickettsia rickettsii (strain Iowa)</name>
    <dbReference type="NCBI Taxonomy" id="452659"/>
    <lineage>
        <taxon>Bacteria</taxon>
        <taxon>Pseudomonadati</taxon>
        <taxon>Pseudomonadota</taxon>
        <taxon>Alphaproteobacteria</taxon>
        <taxon>Rickettsiales</taxon>
        <taxon>Rickettsiaceae</taxon>
        <taxon>Rickettsieae</taxon>
        <taxon>Rickettsia</taxon>
        <taxon>spotted fever group</taxon>
    </lineage>
</organism>
<gene>
    <name evidence="1" type="primary">mutS</name>
    <name type="ordered locus">RrIowa_0482</name>
</gene>
<feature type="chain" id="PRO_1000075559" description="DNA mismatch repair protein MutS">
    <location>
        <begin position="1"/>
        <end position="890"/>
    </location>
</feature>
<feature type="binding site" evidence="1">
    <location>
        <begin position="645"/>
        <end position="652"/>
    </location>
    <ligand>
        <name>ATP</name>
        <dbReference type="ChEBI" id="CHEBI:30616"/>
    </ligand>
</feature>
<evidence type="ECO:0000255" key="1">
    <source>
        <dbReference type="HAMAP-Rule" id="MF_00096"/>
    </source>
</evidence>
<comment type="function">
    <text evidence="1">This protein is involved in the repair of mismatches in DNA. It is possible that it carries out the mismatch recognition step. This protein has a weak ATPase activity.</text>
</comment>
<comment type="similarity">
    <text evidence="1">Belongs to the DNA mismatch repair MutS family.</text>
</comment>
<name>MUTS_RICRO</name>
<accession>B0BWY8</accession>
<dbReference type="EMBL" id="CP000766">
    <property type="protein sequence ID" value="ABY72364.1"/>
    <property type="molecule type" value="Genomic_DNA"/>
</dbReference>
<dbReference type="SMR" id="B0BWY8"/>
<dbReference type="KEGG" id="rrj:RrIowa_0482"/>
<dbReference type="eggNOG" id="COG0249">
    <property type="taxonomic scope" value="Bacteria"/>
</dbReference>
<dbReference type="HOGENOM" id="CLU_002472_3_1_5"/>
<dbReference type="Proteomes" id="UP000000796">
    <property type="component" value="Chromosome"/>
</dbReference>
<dbReference type="GO" id="GO:0005524">
    <property type="term" value="F:ATP binding"/>
    <property type="evidence" value="ECO:0007669"/>
    <property type="project" value="UniProtKB-UniRule"/>
</dbReference>
<dbReference type="GO" id="GO:0140664">
    <property type="term" value="F:ATP-dependent DNA damage sensor activity"/>
    <property type="evidence" value="ECO:0007669"/>
    <property type="project" value="InterPro"/>
</dbReference>
<dbReference type="GO" id="GO:0003684">
    <property type="term" value="F:damaged DNA binding"/>
    <property type="evidence" value="ECO:0007669"/>
    <property type="project" value="UniProtKB-UniRule"/>
</dbReference>
<dbReference type="GO" id="GO:0030983">
    <property type="term" value="F:mismatched DNA binding"/>
    <property type="evidence" value="ECO:0007669"/>
    <property type="project" value="InterPro"/>
</dbReference>
<dbReference type="GO" id="GO:0006298">
    <property type="term" value="P:mismatch repair"/>
    <property type="evidence" value="ECO:0007669"/>
    <property type="project" value="UniProtKB-UniRule"/>
</dbReference>
<dbReference type="CDD" id="cd03284">
    <property type="entry name" value="ABC_MutS1"/>
    <property type="match status" value="1"/>
</dbReference>
<dbReference type="FunFam" id="3.40.50.300:FF:001238">
    <property type="entry name" value="DNA mismatch repair protein"/>
    <property type="match status" value="1"/>
</dbReference>
<dbReference type="FunFam" id="3.40.1170.10:FF:000001">
    <property type="entry name" value="DNA mismatch repair protein MutS"/>
    <property type="match status" value="1"/>
</dbReference>
<dbReference type="Gene3D" id="1.10.1420.10">
    <property type="match status" value="2"/>
</dbReference>
<dbReference type="Gene3D" id="6.10.140.430">
    <property type="match status" value="1"/>
</dbReference>
<dbReference type="Gene3D" id="3.40.1170.10">
    <property type="entry name" value="DNA repair protein MutS, domain I"/>
    <property type="match status" value="1"/>
</dbReference>
<dbReference type="Gene3D" id="3.30.420.110">
    <property type="entry name" value="MutS, connector domain"/>
    <property type="match status" value="1"/>
</dbReference>
<dbReference type="Gene3D" id="3.40.50.300">
    <property type="entry name" value="P-loop containing nucleotide triphosphate hydrolases"/>
    <property type="match status" value="1"/>
</dbReference>
<dbReference type="HAMAP" id="MF_00096">
    <property type="entry name" value="MutS"/>
    <property type="match status" value="1"/>
</dbReference>
<dbReference type="InterPro" id="IPR005748">
    <property type="entry name" value="DNA_mismatch_repair_MutS"/>
</dbReference>
<dbReference type="InterPro" id="IPR007695">
    <property type="entry name" value="DNA_mismatch_repair_MutS-lik_N"/>
</dbReference>
<dbReference type="InterPro" id="IPR017261">
    <property type="entry name" value="DNA_mismatch_repair_MutS/MSH"/>
</dbReference>
<dbReference type="InterPro" id="IPR000432">
    <property type="entry name" value="DNA_mismatch_repair_MutS_C"/>
</dbReference>
<dbReference type="InterPro" id="IPR007861">
    <property type="entry name" value="DNA_mismatch_repair_MutS_clamp"/>
</dbReference>
<dbReference type="InterPro" id="IPR007696">
    <property type="entry name" value="DNA_mismatch_repair_MutS_core"/>
</dbReference>
<dbReference type="InterPro" id="IPR016151">
    <property type="entry name" value="DNA_mismatch_repair_MutS_N"/>
</dbReference>
<dbReference type="InterPro" id="IPR036187">
    <property type="entry name" value="DNA_mismatch_repair_MutS_sf"/>
</dbReference>
<dbReference type="InterPro" id="IPR007860">
    <property type="entry name" value="DNA_mmatch_repair_MutS_con_dom"/>
</dbReference>
<dbReference type="InterPro" id="IPR045076">
    <property type="entry name" value="MutS"/>
</dbReference>
<dbReference type="InterPro" id="IPR036678">
    <property type="entry name" value="MutS_con_dom_sf"/>
</dbReference>
<dbReference type="InterPro" id="IPR027417">
    <property type="entry name" value="P-loop_NTPase"/>
</dbReference>
<dbReference type="NCBIfam" id="TIGR01070">
    <property type="entry name" value="mutS1"/>
    <property type="match status" value="1"/>
</dbReference>
<dbReference type="NCBIfam" id="NF003810">
    <property type="entry name" value="PRK05399.1"/>
    <property type="match status" value="1"/>
</dbReference>
<dbReference type="PANTHER" id="PTHR11361:SF34">
    <property type="entry name" value="DNA MISMATCH REPAIR PROTEIN MSH1, MITOCHONDRIAL"/>
    <property type="match status" value="1"/>
</dbReference>
<dbReference type="PANTHER" id="PTHR11361">
    <property type="entry name" value="DNA MISMATCH REPAIR PROTEIN MUTS FAMILY MEMBER"/>
    <property type="match status" value="1"/>
</dbReference>
<dbReference type="Pfam" id="PF01624">
    <property type="entry name" value="MutS_I"/>
    <property type="match status" value="1"/>
</dbReference>
<dbReference type="Pfam" id="PF05188">
    <property type="entry name" value="MutS_II"/>
    <property type="match status" value="1"/>
</dbReference>
<dbReference type="Pfam" id="PF05192">
    <property type="entry name" value="MutS_III"/>
    <property type="match status" value="1"/>
</dbReference>
<dbReference type="Pfam" id="PF05190">
    <property type="entry name" value="MutS_IV"/>
    <property type="match status" value="1"/>
</dbReference>
<dbReference type="Pfam" id="PF00488">
    <property type="entry name" value="MutS_V"/>
    <property type="match status" value="1"/>
</dbReference>
<dbReference type="PIRSF" id="PIRSF037677">
    <property type="entry name" value="DNA_mis_repair_Msh6"/>
    <property type="match status" value="1"/>
</dbReference>
<dbReference type="SMART" id="SM00534">
    <property type="entry name" value="MUTSac"/>
    <property type="match status" value="1"/>
</dbReference>
<dbReference type="SMART" id="SM00533">
    <property type="entry name" value="MUTSd"/>
    <property type="match status" value="1"/>
</dbReference>
<dbReference type="SUPFAM" id="SSF55271">
    <property type="entry name" value="DNA repair protein MutS, domain I"/>
    <property type="match status" value="1"/>
</dbReference>
<dbReference type="SUPFAM" id="SSF53150">
    <property type="entry name" value="DNA repair protein MutS, domain II"/>
    <property type="match status" value="1"/>
</dbReference>
<dbReference type="SUPFAM" id="SSF48334">
    <property type="entry name" value="DNA repair protein MutS, domain III"/>
    <property type="match status" value="1"/>
</dbReference>
<dbReference type="SUPFAM" id="SSF52540">
    <property type="entry name" value="P-loop containing nucleoside triphosphate hydrolases"/>
    <property type="match status" value="1"/>
</dbReference>
<dbReference type="PROSITE" id="PS00486">
    <property type="entry name" value="DNA_MISMATCH_REPAIR_2"/>
    <property type="match status" value="1"/>
</dbReference>
<reference key="1">
    <citation type="journal article" date="2008" name="Infect. Immun.">
        <title>Genomic comparison of virulent Rickettsia rickettsii Sheila Smith and avirulent Rickettsia rickettsii Iowa.</title>
        <authorList>
            <person name="Ellison D.W."/>
            <person name="Clark T.R."/>
            <person name="Sturdevant D.E."/>
            <person name="Virtaneva K."/>
            <person name="Porcella S.F."/>
            <person name="Hackstadt T."/>
        </authorList>
    </citation>
    <scope>NUCLEOTIDE SEQUENCE [LARGE SCALE GENOMIC DNA]</scope>
    <source>
        <strain>Iowa</strain>
    </source>
</reference>
<protein>
    <recommendedName>
        <fullName evidence="1">DNA mismatch repair protein MutS</fullName>
    </recommendedName>
</protein>
<proteinExistence type="inferred from homology"/>